<reference key="1">
    <citation type="journal article" date="1997" name="Genome Res.">
        <title>Analysis of the 1.1-Mb human alpha/delta T-cell receptor locus with bacterial artificial chromosome clones.</title>
        <authorList>
            <person name="Boysen C."/>
            <person name="Simon M.I."/>
            <person name="Hood L."/>
        </authorList>
    </citation>
    <scope>NUCLEOTIDE SEQUENCE [GENOMIC DNA] (IMGT ALLELE TRDV2*03)</scope>
</reference>
<reference key="2">
    <citation type="journal article" date="2003" name="Nature">
        <title>The DNA sequence and analysis of human chromosome 14.</title>
        <authorList>
            <person name="Heilig R."/>
            <person name="Eckenberg R."/>
            <person name="Petit J.-L."/>
            <person name="Fonknechten N."/>
            <person name="Da Silva C."/>
            <person name="Cattolico L."/>
            <person name="Levy M."/>
            <person name="Barbe V."/>
            <person name="De Berardinis V."/>
            <person name="Ureta-Vidal A."/>
            <person name="Pelletier E."/>
            <person name="Vico V."/>
            <person name="Anthouard V."/>
            <person name="Rowen L."/>
            <person name="Madan A."/>
            <person name="Qin S."/>
            <person name="Sun H."/>
            <person name="Du H."/>
            <person name="Pepin K."/>
            <person name="Artiguenave F."/>
            <person name="Robert C."/>
            <person name="Cruaud C."/>
            <person name="Bruels T."/>
            <person name="Jaillon O."/>
            <person name="Friedlander L."/>
            <person name="Samson G."/>
            <person name="Brottier P."/>
            <person name="Cure S."/>
            <person name="Segurens B."/>
            <person name="Aniere F."/>
            <person name="Samain S."/>
            <person name="Crespeau H."/>
            <person name="Abbasi N."/>
            <person name="Aiach N."/>
            <person name="Boscus D."/>
            <person name="Dickhoff R."/>
            <person name="Dors M."/>
            <person name="Dubois I."/>
            <person name="Friedman C."/>
            <person name="Gouyvenoux M."/>
            <person name="James R."/>
            <person name="Madan A."/>
            <person name="Mairey-Estrada B."/>
            <person name="Mangenot S."/>
            <person name="Martins N."/>
            <person name="Menard M."/>
            <person name="Oztas S."/>
            <person name="Ratcliffe A."/>
            <person name="Shaffer T."/>
            <person name="Trask B."/>
            <person name="Vacherie B."/>
            <person name="Bellemere C."/>
            <person name="Belser C."/>
            <person name="Besnard-Gonnet M."/>
            <person name="Bartol-Mavel D."/>
            <person name="Boutard M."/>
            <person name="Briez-Silla S."/>
            <person name="Combette S."/>
            <person name="Dufosse-Laurent V."/>
            <person name="Ferron C."/>
            <person name="Lechaplais C."/>
            <person name="Louesse C."/>
            <person name="Muselet D."/>
            <person name="Magdelenat G."/>
            <person name="Pateau E."/>
            <person name="Petit E."/>
            <person name="Sirvain-Trukniewicz P."/>
            <person name="Trybou A."/>
            <person name="Vega-Czarny N."/>
            <person name="Bataille E."/>
            <person name="Bluet E."/>
            <person name="Bordelais I."/>
            <person name="Dubois M."/>
            <person name="Dumont C."/>
            <person name="Guerin T."/>
            <person name="Haffray S."/>
            <person name="Hammadi R."/>
            <person name="Muanga J."/>
            <person name="Pellouin V."/>
            <person name="Robert D."/>
            <person name="Wunderle E."/>
            <person name="Gauguet G."/>
            <person name="Roy A."/>
            <person name="Sainte-Marthe L."/>
            <person name="Verdier J."/>
            <person name="Verdier-Discala C."/>
            <person name="Hillier L.W."/>
            <person name="Fulton L."/>
            <person name="McPherson J."/>
            <person name="Matsuda F."/>
            <person name="Wilson R."/>
            <person name="Scarpelli C."/>
            <person name="Gyapay G."/>
            <person name="Wincker P."/>
            <person name="Saurin W."/>
            <person name="Quetier F."/>
            <person name="Waterston R."/>
            <person name="Hood L."/>
            <person name="Weissenbach J."/>
        </authorList>
    </citation>
    <scope>NUCLEOTIDE SEQUENCE [LARGE SCALE GENOMIC DNA] (IMGT ALLELE TRDV2*03)</scope>
</reference>
<reference key="3">
    <citation type="book" date="2001" name="The T Cell Receptor FactsBook.">
        <title>The T Cell Receptor FactsBook.</title>
        <editorList>
            <person name="Lefranc M.P."/>
            <person name="Lefranc G."/>
        </editorList>
        <authorList>
            <person name="Lefranc M.P."/>
            <person name="Lefranc G."/>
        </authorList>
    </citation>
    <scope>NOMENCLATURE</scope>
</reference>
<reference key="4">
    <citation type="journal article" date="2013" name="Nat. Rev. Immunol.">
        <title>Six-of-the-best: unique contributions of gammadelta T cells to immunology.</title>
        <authorList>
            <person name="Vantourout P."/>
            <person name="Hayday A."/>
        </authorList>
    </citation>
    <scope>REVIEW ON FUNCTION AND ANTIGEN RECOGNITION</scope>
</reference>
<reference key="5">
    <citation type="journal article" date="2014" name="Annu. Rev. Immunol.">
        <title>gammadelta T cells: first line of defense and beyond.</title>
        <authorList>
            <person name="Chien Y.H."/>
            <person name="Meyer C."/>
            <person name="Bonneville M."/>
        </authorList>
    </citation>
    <scope>REVIEW ON GAMMA DELTA T CELL RECEPTOR DIVERSITY</scope>
</reference>
<reference key="6">
    <citation type="journal article" date="2014" name="Front. Immunol.">
        <title>Immunoglobulin and T Cell Receptor Genes: IMGT((R)) and the Birth and Rise of Immunoinformatics.</title>
        <authorList>
            <person name="Lefranc M.P."/>
        </authorList>
    </citation>
    <scope>NOMENCLATURE</scope>
</reference>
<reference key="7">
    <citation type="journal article" date="2015" name="Front. Immunol.">
        <title>Five Layers of Receptor Signaling in gammadelta T-Cell Differentiation and Activation.</title>
        <authorList>
            <person name="Ribeiro S.T."/>
            <person name="Ribot J.C."/>
            <person name="Silva-Santos B."/>
        </authorList>
    </citation>
    <scope>REVIEW ON T CELL RECEPTOR SIGNALING</scope>
    <scope>SUBUNIT</scope>
</reference>
<reference key="8">
    <citation type="journal article" date="2017" name="Nat. Rev. Immunol.">
        <title>gammadelta T cells in homeostasis and host defence of epithelial barrier tissues.</title>
        <authorList>
            <person name="Nielsen M.M."/>
            <person name="Witherden D.A."/>
            <person name="Havran W.L."/>
        </authorList>
    </citation>
    <scope>REVIEW ON FUNCTION</scope>
</reference>
<name>TRDV2_HUMAN</name>
<protein>
    <recommendedName>
        <fullName evidence="9">T cell receptor delta variable 2</fullName>
    </recommendedName>
</protein>
<dbReference type="EMBL" id="AC244502">
    <property type="status" value="NOT_ANNOTATED_CDS"/>
    <property type="molecule type" value="Genomic_DNA"/>
</dbReference>
<dbReference type="EMBL" id="AE000521">
    <property type="protein sequence ID" value="AAB69040.1"/>
    <property type="molecule type" value="Genomic_DNA"/>
</dbReference>
<dbReference type="PDB" id="8JC0">
    <property type="method" value="EM"/>
    <property type="resolution" value="3.40 A"/>
    <property type="chains" value="m=20-115"/>
</dbReference>
<dbReference type="PDB" id="8WY0">
    <property type="method" value="EM"/>
    <property type="resolution" value="3.80 A"/>
    <property type="chains" value="m=19-115"/>
</dbReference>
<dbReference type="PDB" id="8WYI">
    <property type="method" value="EM"/>
    <property type="resolution" value="3.90 A"/>
    <property type="chains" value="m=19-115"/>
</dbReference>
<dbReference type="PDB" id="8YC0">
    <property type="method" value="EM"/>
    <property type="resolution" value="4.12 A"/>
    <property type="chains" value="m=20-115"/>
</dbReference>
<dbReference type="PDBsum" id="8JC0"/>
<dbReference type="PDBsum" id="8WY0"/>
<dbReference type="PDBsum" id="8WYI"/>
<dbReference type="PDBsum" id="8YC0"/>
<dbReference type="SMR" id="A0JD36"/>
<dbReference type="FunCoup" id="A0JD36">
    <property type="interactions" value="292"/>
</dbReference>
<dbReference type="IMGT_GENE-DB" id="TRDV2"/>
<dbReference type="BioMuta" id="TRDV2"/>
<dbReference type="MassIVE" id="A0JD36"/>
<dbReference type="Ensembl" id="ENST00000390469.2">
    <property type="protein sequence ID" value="ENSP00000451578.1"/>
    <property type="gene ID" value="ENSG00000211821.2"/>
</dbReference>
<dbReference type="UCSC" id="uc001wdu.3">
    <property type="organism name" value="human"/>
</dbReference>
<dbReference type="AGR" id="HGNC:12263"/>
<dbReference type="GeneCards" id="TRDV2"/>
<dbReference type="HGNC" id="HGNC:12263">
    <property type="gene designation" value="TRDV2"/>
</dbReference>
<dbReference type="HPA" id="ENSG00000211821">
    <property type="expression patterns" value="Tissue enhanced (epididymis, lymphoid tissue)"/>
</dbReference>
<dbReference type="neXtProt" id="NX_A0JD36"/>
<dbReference type="OpenTargets" id="ENSG00000211821"/>
<dbReference type="VEuPathDB" id="HostDB:ENSG00000211821"/>
<dbReference type="GeneTree" id="ENSGT00940000165951"/>
<dbReference type="HOGENOM" id="CLU_077975_4_0_1"/>
<dbReference type="InParanoid" id="A0JD36"/>
<dbReference type="OMA" id="HVEQQFQ"/>
<dbReference type="OrthoDB" id="9945861at2759"/>
<dbReference type="PAN-GO" id="A0JD36">
    <property type="GO annotations" value="3 GO annotations based on evolutionary models"/>
</dbReference>
<dbReference type="PhylomeDB" id="A0JD36"/>
<dbReference type="ChiTaRS" id="TRDV2">
    <property type="organism name" value="human"/>
</dbReference>
<dbReference type="Pharos" id="A0JD36">
    <property type="development level" value="Tdark"/>
</dbReference>
<dbReference type="PRO" id="PR:A0JD36"/>
<dbReference type="Proteomes" id="UP000005640">
    <property type="component" value="Chromosome 14"/>
</dbReference>
<dbReference type="RNAct" id="A0JD36">
    <property type="molecule type" value="protein"/>
</dbReference>
<dbReference type="Bgee" id="ENSG00000211821">
    <property type="expression patterns" value="Expressed in male germ line stem cell (sensu Vertebrata) in testis and 42 other cell types or tissues"/>
</dbReference>
<dbReference type="GO" id="GO:0042101">
    <property type="term" value="C:T cell receptor complex"/>
    <property type="evidence" value="ECO:0007669"/>
    <property type="project" value="UniProtKB-KW"/>
</dbReference>
<dbReference type="GO" id="GO:0002250">
    <property type="term" value="P:adaptive immune response"/>
    <property type="evidence" value="ECO:0007669"/>
    <property type="project" value="UniProtKB-KW"/>
</dbReference>
<dbReference type="GO" id="GO:0045087">
    <property type="term" value="P:innate immune response"/>
    <property type="evidence" value="ECO:0007669"/>
    <property type="project" value="UniProtKB-KW"/>
</dbReference>
<dbReference type="FunFam" id="2.60.40.10:FF:002419">
    <property type="entry name" value="T cell receptor delta constant"/>
    <property type="match status" value="1"/>
</dbReference>
<dbReference type="Gene3D" id="2.60.40.10">
    <property type="entry name" value="Immunoglobulins"/>
    <property type="match status" value="1"/>
</dbReference>
<dbReference type="InterPro" id="IPR007110">
    <property type="entry name" value="Ig-like_dom"/>
</dbReference>
<dbReference type="InterPro" id="IPR036179">
    <property type="entry name" value="Ig-like_dom_sf"/>
</dbReference>
<dbReference type="InterPro" id="IPR013783">
    <property type="entry name" value="Ig-like_fold"/>
</dbReference>
<dbReference type="InterPro" id="IPR013106">
    <property type="entry name" value="Ig_V-set"/>
</dbReference>
<dbReference type="InterPro" id="IPR051117">
    <property type="entry name" value="TRG_var/const_region"/>
</dbReference>
<dbReference type="PANTHER" id="PTHR19256:SF44">
    <property type="entry name" value="T CELL RECEPTOR GAMMA VARIABLE 9"/>
    <property type="match status" value="1"/>
</dbReference>
<dbReference type="PANTHER" id="PTHR19256">
    <property type="entry name" value="T-CELL RECEPTOR GAMMA CHAIN"/>
    <property type="match status" value="1"/>
</dbReference>
<dbReference type="Pfam" id="PF07686">
    <property type="entry name" value="V-set"/>
    <property type="match status" value="1"/>
</dbReference>
<dbReference type="SMART" id="SM00406">
    <property type="entry name" value="IGv"/>
    <property type="match status" value="1"/>
</dbReference>
<dbReference type="SUPFAM" id="SSF48726">
    <property type="entry name" value="Immunoglobulin"/>
    <property type="match status" value="1"/>
</dbReference>
<dbReference type="PROSITE" id="PS50835">
    <property type="entry name" value="IG_LIKE"/>
    <property type="match status" value="1"/>
</dbReference>
<sequence length="115" mass="12944">MQRISSLIHLSLFWAGVMSAIELVPEHQTVPVSIGVPATLRCSMKGEAIGNYYINWYRKTQGNTMTFIYREKDIYGPGFKDNFQGDIDIAKNLAVLKILAPSERDEGSYYCACDT</sequence>
<accession>A0JD36</accession>
<comment type="function">
    <text evidence="3 4 5 6 7">V region of the variable domain of T cell receptor (TR) delta chain that participates in the antigen recognition (PubMed:24600447). Gamma-delta TRs recognize a variety of self and foreign non-peptide antigens frequently expressed at the epithelial boundaries between the host and external environment, including endogenous lipids presented by MH-like protein CD1D and phosphoantigens presented by butyrophilin-like molecule BTN3A1. Upon antigen recognition induces rapid, innate-like immune responses involved in pathogen clearance and tissue repair (PubMed:23348415, PubMed:28920588). Binding of gamma-delta TR complex to antigen triggers phosphorylation of immunoreceptor tyrosine-based activation motifs (ITAMs) in the CD3 chains by the LCK and FYN kinases, allowing the recruitment, phosphorylation, and activation of ZAP70 that facilitates phosphorylation of the scaffolding proteins LCP2 and LAT. This lead to the formation of a supramolecular signalosome that recruits the phospholipase PLCG1, resulting in calcium mobilization and ERK activation, ultimately leading to T cell expansion and differentiation into effector cells (PubMed:25674089). Gamma-delta TRs are produced through somatic rearrangement of a limited repertoire of variable (V), diversity (D), and joining (J) genes. The potential diversity of gamma-delta TRs is conferred by the unique ability to rearrange (D) genes in tandem and to utilize all three reading frames. The combinatorial diversity is considerably increased by the sequence exonuclease trimming and random nucleotide (N) region additions which occur during the V-(D)-J rearrangements (PubMed:24387714).</text>
</comment>
<comment type="subunit">
    <text evidence="6">Gamma-delta TR is a heterodimer composed of a gamma and delta chain; disulfide-linked. The gamma-delta TR is associated with the transmembrane signaling CD3 coreceptor proteins following the stoichiometry: a single gamma-delta TR heterodimer associates with one CD3D-CD3E heterodimer, one CD3G-CD3E heterodimer and one CD247 homodimer forming a stable octameric structure. Upon activation, gamma-delta TR complex associates with FCER1G to initiate intracellular signaling.</text>
</comment>
<comment type="subcellular location">
    <subcellularLocation>
        <location evidence="10">Cell membrane</location>
    </subcellularLocation>
</comment>
<comment type="polymorphism">
    <text evidence="10">There are several alleles. The sequence shown is that of IMGT allele TRDV2*03.</text>
</comment>
<proteinExistence type="evidence at protein level"/>
<evidence type="ECO:0000255" key="1"/>
<evidence type="ECO:0000255" key="2">
    <source>
        <dbReference type="PROSITE-ProRule" id="PRU00114"/>
    </source>
</evidence>
<evidence type="ECO:0000303" key="3">
    <source>
    </source>
</evidence>
<evidence type="ECO:0000303" key="4">
    <source>
    </source>
</evidence>
<evidence type="ECO:0000303" key="5">
    <source>
    </source>
</evidence>
<evidence type="ECO:0000303" key="6">
    <source>
    </source>
</evidence>
<evidence type="ECO:0000303" key="7">
    <source>
    </source>
</evidence>
<evidence type="ECO:0000303" key="8">
    <source>
    </source>
</evidence>
<evidence type="ECO:0000303" key="9">
    <source ref="3"/>
</evidence>
<evidence type="ECO:0000305" key="10"/>
<organism>
    <name type="scientific">Homo sapiens</name>
    <name type="common">Human</name>
    <dbReference type="NCBI Taxonomy" id="9606"/>
    <lineage>
        <taxon>Eukaryota</taxon>
        <taxon>Metazoa</taxon>
        <taxon>Chordata</taxon>
        <taxon>Craniata</taxon>
        <taxon>Vertebrata</taxon>
        <taxon>Euteleostomi</taxon>
        <taxon>Mammalia</taxon>
        <taxon>Eutheria</taxon>
        <taxon>Euarchontoglires</taxon>
        <taxon>Primates</taxon>
        <taxon>Haplorrhini</taxon>
        <taxon>Catarrhini</taxon>
        <taxon>Hominidae</taxon>
        <taxon>Homo</taxon>
    </lineage>
</organism>
<keyword id="KW-0002">3D-structure</keyword>
<keyword id="KW-1064">Adaptive immunity</keyword>
<keyword id="KW-1003">Cell membrane</keyword>
<keyword id="KW-1015">Disulfide bond</keyword>
<keyword id="KW-0391">Immunity</keyword>
<keyword id="KW-0393">Immunoglobulin domain</keyword>
<keyword id="KW-0399">Innate immunity</keyword>
<keyword id="KW-0472">Membrane</keyword>
<keyword id="KW-1267">Proteomics identification</keyword>
<keyword id="KW-0675">Receptor</keyword>
<keyword id="KW-1185">Reference proteome</keyword>
<keyword id="KW-0732">Signal</keyword>
<keyword id="KW-1279">T cell receptor</keyword>
<feature type="signal peptide" evidence="1">
    <location>
        <begin position="1"/>
        <end position="19"/>
    </location>
</feature>
<feature type="chain" id="PRO_5014083231" description="T cell receptor delta variable 2" evidence="1">
    <location>
        <begin position="20"/>
        <end position="115"/>
    </location>
</feature>
<feature type="domain" description="Ig-like" evidence="2">
    <location>
        <begin position="25"/>
        <end position="115" status="greater than"/>
    </location>
</feature>
<feature type="disulfide bond" evidence="2">
    <location>
        <begin position="42"/>
        <end position="111"/>
    </location>
</feature>
<feature type="non-terminal residue">
    <location>
        <position position="115"/>
    </location>
</feature>
<gene>
    <name evidence="9" type="primary">TRDV2</name>
    <name evidence="8" type="synonym">hDV102S1</name>
</gene>